<name>RCF1_ARTOC</name>
<sequence>MGDKPLPSSFDDNPDFFQDNPWKKLGRRLKEEPLVPLGIGATCYALFRAYRSMKMGDSVQVNRMFRARIYAQAFTLLAVCAGSVYYKTERDQRKQLEKAMDLKKQQTKRDAWLKELEIRDQEDKDWQSRHAAIEQAAKGAELKPLGTDPAPETAERDQAEEPAAKEPGEGSGGGVLSAVKNLTWGSK</sequence>
<protein>
    <recommendedName>
        <fullName>Respiratory supercomplex factor 1, mitochondrial</fullName>
    </recommendedName>
</protein>
<dbReference type="EMBL" id="DS995705">
    <property type="protein sequence ID" value="EEQ32910.1"/>
    <property type="molecule type" value="Genomic_DNA"/>
</dbReference>
<dbReference type="RefSeq" id="XP_002845860.1">
    <property type="nucleotide sequence ID" value="XM_002845814.1"/>
</dbReference>
<dbReference type="STRING" id="554155.C5FSQ7"/>
<dbReference type="GeneID" id="9224159"/>
<dbReference type="VEuPathDB" id="FungiDB:MCYG_05729"/>
<dbReference type="eggNOG" id="KOG4431">
    <property type="taxonomic scope" value="Eukaryota"/>
</dbReference>
<dbReference type="HOGENOM" id="CLU_087356_0_2_1"/>
<dbReference type="OMA" id="QRWIREL"/>
<dbReference type="OrthoDB" id="6604018at2759"/>
<dbReference type="Proteomes" id="UP000002035">
    <property type="component" value="Unassembled WGS sequence"/>
</dbReference>
<dbReference type="GO" id="GO:0031966">
    <property type="term" value="C:mitochondrial membrane"/>
    <property type="evidence" value="ECO:0007669"/>
    <property type="project" value="UniProtKB-SubCell"/>
</dbReference>
<dbReference type="GO" id="GO:0097250">
    <property type="term" value="P:mitochondrial respirasome assembly"/>
    <property type="evidence" value="ECO:0007669"/>
    <property type="project" value="TreeGrafter"/>
</dbReference>
<dbReference type="Gene3D" id="6.10.140.1320">
    <property type="match status" value="1"/>
</dbReference>
<dbReference type="InterPro" id="IPR007667">
    <property type="entry name" value="Hypoxia_induced_domain"/>
</dbReference>
<dbReference type="InterPro" id="IPR050355">
    <property type="entry name" value="RCF1"/>
</dbReference>
<dbReference type="PANTHER" id="PTHR12297:SF3">
    <property type="entry name" value="HIG1 DOMAIN FAMILY MEMBER 1A"/>
    <property type="match status" value="1"/>
</dbReference>
<dbReference type="PANTHER" id="PTHR12297">
    <property type="entry name" value="HYPOXIA-INDUCBILE GENE 1 HIG1 -RELATED"/>
    <property type="match status" value="1"/>
</dbReference>
<dbReference type="Pfam" id="PF04588">
    <property type="entry name" value="HIG_1_N"/>
    <property type="match status" value="1"/>
</dbReference>
<dbReference type="PROSITE" id="PS51503">
    <property type="entry name" value="HIG1"/>
    <property type="match status" value="1"/>
</dbReference>
<evidence type="ECO:0000250" key="1"/>
<evidence type="ECO:0000255" key="2"/>
<evidence type="ECO:0000255" key="3">
    <source>
        <dbReference type="PROSITE-ProRule" id="PRU00836"/>
    </source>
</evidence>
<evidence type="ECO:0000256" key="4">
    <source>
        <dbReference type="SAM" id="MobiDB-lite"/>
    </source>
</evidence>
<evidence type="ECO:0000305" key="5"/>
<feature type="chain" id="PRO_0000399639" description="Respiratory supercomplex factor 1, mitochondrial">
    <location>
        <begin position="1"/>
        <end position="187"/>
    </location>
</feature>
<feature type="transmembrane region" description="Helical" evidence="3">
    <location>
        <begin position="33"/>
        <end position="49"/>
    </location>
</feature>
<feature type="transmembrane region" description="Helical" evidence="3">
    <location>
        <begin position="64"/>
        <end position="86"/>
    </location>
</feature>
<feature type="domain" description="HIG1" evidence="3">
    <location>
        <begin position="6"/>
        <end position="97"/>
    </location>
</feature>
<feature type="region of interest" description="Disordered" evidence="4">
    <location>
        <begin position="136"/>
        <end position="187"/>
    </location>
</feature>
<feature type="coiled-coil region" evidence="2">
    <location>
        <begin position="86"/>
        <end position="109"/>
    </location>
</feature>
<feature type="compositionally biased region" description="Basic and acidic residues" evidence="4">
    <location>
        <begin position="153"/>
        <end position="168"/>
    </location>
</feature>
<keyword id="KW-0175">Coiled coil</keyword>
<keyword id="KW-0472">Membrane</keyword>
<keyword id="KW-0496">Mitochondrion</keyword>
<keyword id="KW-1185">Reference proteome</keyword>
<keyword id="KW-0812">Transmembrane</keyword>
<keyword id="KW-1133">Transmembrane helix</keyword>
<comment type="function">
    <text evidence="1">Cytochrome c oxidase subunit which plays a role in assembly of respiratory supercomplexes.</text>
</comment>
<comment type="subunit">
    <text evidence="1">Associates with the respiratory chain complex III/complex IV supercomplex.</text>
</comment>
<comment type="subcellular location">
    <subcellularLocation>
        <location evidence="3">Mitochondrion membrane</location>
        <topology evidence="3">Multi-pass membrane protein</topology>
    </subcellularLocation>
</comment>
<comment type="similarity">
    <text evidence="5">Belongs to the RCF1 family.</text>
</comment>
<reference key="1">
    <citation type="journal article" date="2012" name="MBio">
        <title>Comparative genome analysis of Trichophyton rubrum and related dermatophytes reveals candidate genes involved in infection.</title>
        <authorList>
            <person name="Martinez D.A."/>
            <person name="Oliver B.G."/>
            <person name="Graeser Y."/>
            <person name="Goldberg J.M."/>
            <person name="Li W."/>
            <person name="Martinez-Rossi N.M."/>
            <person name="Monod M."/>
            <person name="Shelest E."/>
            <person name="Barton R.C."/>
            <person name="Birch E."/>
            <person name="Brakhage A.A."/>
            <person name="Chen Z."/>
            <person name="Gurr S.J."/>
            <person name="Heiman D."/>
            <person name="Heitman J."/>
            <person name="Kosti I."/>
            <person name="Rossi A."/>
            <person name="Saif S."/>
            <person name="Samalova M."/>
            <person name="Saunders C.W."/>
            <person name="Shea T."/>
            <person name="Summerbell R.C."/>
            <person name="Xu J."/>
            <person name="Young S."/>
            <person name="Zeng Q."/>
            <person name="Birren B.W."/>
            <person name="Cuomo C.A."/>
            <person name="White T.C."/>
        </authorList>
    </citation>
    <scope>NUCLEOTIDE SEQUENCE [LARGE SCALE GENOMIC DNA]</scope>
    <source>
        <strain>ATCC MYA-4605 / CBS 113480</strain>
    </source>
</reference>
<organism>
    <name type="scientific">Arthroderma otae (strain ATCC MYA-4605 / CBS 113480)</name>
    <name type="common">Microsporum canis</name>
    <dbReference type="NCBI Taxonomy" id="554155"/>
    <lineage>
        <taxon>Eukaryota</taxon>
        <taxon>Fungi</taxon>
        <taxon>Dikarya</taxon>
        <taxon>Ascomycota</taxon>
        <taxon>Pezizomycotina</taxon>
        <taxon>Eurotiomycetes</taxon>
        <taxon>Eurotiomycetidae</taxon>
        <taxon>Onygenales</taxon>
        <taxon>Arthrodermataceae</taxon>
        <taxon>Microsporum</taxon>
    </lineage>
</organism>
<gene>
    <name type="primary">RCF1</name>
    <name type="synonym">AIM31</name>
    <name type="ORF">MCYG_05729</name>
</gene>
<proteinExistence type="inferred from homology"/>
<accession>C5FSQ7</accession>